<proteinExistence type="inferred from homology"/>
<comment type="similarity">
    <text evidence="1">Belongs to the UPF0145 family.</text>
</comment>
<evidence type="ECO:0000255" key="1">
    <source>
        <dbReference type="HAMAP-Rule" id="MF_00338"/>
    </source>
</evidence>
<name>Y3206_BACHK</name>
<feature type="chain" id="PRO_0000225811" description="UPF0145 protein BT9727_3206">
    <location>
        <begin position="1"/>
        <end position="103"/>
    </location>
</feature>
<organism>
    <name type="scientific">Bacillus thuringiensis subsp. konkukian (strain 97-27)</name>
    <dbReference type="NCBI Taxonomy" id="281309"/>
    <lineage>
        <taxon>Bacteria</taxon>
        <taxon>Bacillati</taxon>
        <taxon>Bacillota</taxon>
        <taxon>Bacilli</taxon>
        <taxon>Bacillales</taxon>
        <taxon>Bacillaceae</taxon>
        <taxon>Bacillus</taxon>
        <taxon>Bacillus cereus group</taxon>
    </lineage>
</organism>
<accession>Q6HFZ7</accession>
<gene>
    <name type="ordered locus">BT9727_3206</name>
</gene>
<protein>
    <recommendedName>
        <fullName evidence="1">UPF0145 protein BT9727_3206</fullName>
    </recommendedName>
</protein>
<sequence length="103" mass="11035">MIVTTTSGIQGKEIIDYIDIVNGEAIMGANIVRDLFASVRDVVGGRAGSYESKLKEARDIAMDEMKELAKQKGANAIVGIDVDYEVVRDGMLMVAVSGTAVRI</sequence>
<dbReference type="EMBL" id="AE017355">
    <property type="protein sequence ID" value="AAT60429.1"/>
    <property type="molecule type" value="Genomic_DNA"/>
</dbReference>
<dbReference type="RefSeq" id="WP_000637502.1">
    <property type="nucleotide sequence ID" value="NC_005957.1"/>
</dbReference>
<dbReference type="RefSeq" id="YP_037529.1">
    <property type="nucleotide sequence ID" value="NC_005957.1"/>
</dbReference>
<dbReference type="SMR" id="Q6HFZ7"/>
<dbReference type="KEGG" id="btk:BT9727_3206"/>
<dbReference type="PATRIC" id="fig|281309.8.peg.3416"/>
<dbReference type="HOGENOM" id="CLU_117144_3_2_9"/>
<dbReference type="Proteomes" id="UP000001301">
    <property type="component" value="Chromosome"/>
</dbReference>
<dbReference type="Gene3D" id="3.30.110.70">
    <property type="entry name" value="Hypothetical protein apc22750. Chain B"/>
    <property type="match status" value="1"/>
</dbReference>
<dbReference type="HAMAP" id="MF_00338">
    <property type="entry name" value="UPF0145"/>
    <property type="match status" value="1"/>
</dbReference>
<dbReference type="InterPro" id="IPR035439">
    <property type="entry name" value="UPF0145_dom_sf"/>
</dbReference>
<dbReference type="InterPro" id="IPR002765">
    <property type="entry name" value="UPF0145_YbjQ-like"/>
</dbReference>
<dbReference type="NCBIfam" id="NF009495">
    <property type="entry name" value="PRK12855.1"/>
    <property type="match status" value="1"/>
</dbReference>
<dbReference type="NCBIfam" id="NF009496">
    <property type="entry name" value="PRK12856.1"/>
    <property type="match status" value="1"/>
</dbReference>
<dbReference type="PANTHER" id="PTHR34068">
    <property type="entry name" value="UPF0145 PROTEIN YBJQ"/>
    <property type="match status" value="1"/>
</dbReference>
<dbReference type="PANTHER" id="PTHR34068:SF1">
    <property type="entry name" value="UPF0145 PROTEIN YBJQ"/>
    <property type="match status" value="1"/>
</dbReference>
<dbReference type="Pfam" id="PF01906">
    <property type="entry name" value="YbjQ_1"/>
    <property type="match status" value="1"/>
</dbReference>
<dbReference type="SUPFAM" id="SSF117782">
    <property type="entry name" value="YbjQ-like"/>
    <property type="match status" value="1"/>
</dbReference>
<reference key="1">
    <citation type="journal article" date="2006" name="J. Bacteriol.">
        <title>Pathogenomic sequence analysis of Bacillus cereus and Bacillus thuringiensis isolates closely related to Bacillus anthracis.</title>
        <authorList>
            <person name="Han C.S."/>
            <person name="Xie G."/>
            <person name="Challacombe J.F."/>
            <person name="Altherr M.R."/>
            <person name="Bhotika S.S."/>
            <person name="Bruce D."/>
            <person name="Campbell C.S."/>
            <person name="Campbell M.L."/>
            <person name="Chen J."/>
            <person name="Chertkov O."/>
            <person name="Cleland C."/>
            <person name="Dimitrijevic M."/>
            <person name="Doggett N.A."/>
            <person name="Fawcett J.J."/>
            <person name="Glavina T."/>
            <person name="Goodwin L.A."/>
            <person name="Hill K.K."/>
            <person name="Hitchcock P."/>
            <person name="Jackson P.J."/>
            <person name="Keim P."/>
            <person name="Kewalramani A.R."/>
            <person name="Longmire J."/>
            <person name="Lucas S."/>
            <person name="Malfatti S."/>
            <person name="McMurry K."/>
            <person name="Meincke L.J."/>
            <person name="Misra M."/>
            <person name="Moseman B.L."/>
            <person name="Mundt M."/>
            <person name="Munk A.C."/>
            <person name="Okinaka R.T."/>
            <person name="Parson-Quintana B."/>
            <person name="Reilly L.P."/>
            <person name="Richardson P."/>
            <person name="Robinson D.L."/>
            <person name="Rubin E."/>
            <person name="Saunders E."/>
            <person name="Tapia R."/>
            <person name="Tesmer J.G."/>
            <person name="Thayer N."/>
            <person name="Thompson L.S."/>
            <person name="Tice H."/>
            <person name="Ticknor L.O."/>
            <person name="Wills P.L."/>
            <person name="Brettin T.S."/>
            <person name="Gilna P."/>
        </authorList>
    </citation>
    <scope>NUCLEOTIDE SEQUENCE [LARGE SCALE GENOMIC DNA]</scope>
    <source>
        <strain>97-27</strain>
    </source>
</reference>